<accession>Q751N0</accession>
<name>DYN3_EREGS</name>
<evidence type="ECO:0000250" key="1"/>
<evidence type="ECO:0000305" key="2"/>
<proteinExistence type="inferred from homology"/>
<keyword id="KW-0963">Cytoplasm</keyword>
<keyword id="KW-0206">Cytoskeleton</keyword>
<keyword id="KW-0243">Dynein</keyword>
<keyword id="KW-0493">Microtubule</keyword>
<keyword id="KW-0505">Motor protein</keyword>
<keyword id="KW-1185">Reference proteome</keyword>
<gene>
    <name type="primary">DYN3</name>
    <name type="ordered locus">AGL333W</name>
</gene>
<reference key="1">
    <citation type="journal article" date="2004" name="Science">
        <title>The Ashbya gossypii genome as a tool for mapping the ancient Saccharomyces cerevisiae genome.</title>
        <authorList>
            <person name="Dietrich F.S."/>
            <person name="Voegeli S."/>
            <person name="Brachat S."/>
            <person name="Lerch A."/>
            <person name="Gates K."/>
            <person name="Steiner S."/>
            <person name="Mohr C."/>
            <person name="Poehlmann R."/>
            <person name="Luedi P."/>
            <person name="Choi S."/>
            <person name="Wing R.A."/>
            <person name="Flavier A."/>
            <person name="Gaffney T.D."/>
            <person name="Philippsen P."/>
        </authorList>
    </citation>
    <scope>NUCLEOTIDE SEQUENCE [LARGE SCALE GENOMIC DNA]</scope>
    <source>
        <strain>ATCC 10895 / CBS 109.51 / FGSC 9923 / NRRL Y-1056</strain>
    </source>
</reference>
<reference key="2">
    <citation type="journal article" date="2013" name="G3 (Bethesda)">
        <title>Genomes of Ashbya fungi isolated from insects reveal four mating-type loci, numerous translocations, lack of transposons, and distinct gene duplications.</title>
        <authorList>
            <person name="Dietrich F.S."/>
            <person name="Voegeli S."/>
            <person name="Kuo S."/>
            <person name="Philippsen P."/>
        </authorList>
    </citation>
    <scope>GENOME REANNOTATION</scope>
    <source>
        <strain>ATCC 10895 / CBS 109.51 / FGSC 9923 / NRRL Y-1056</strain>
    </source>
</reference>
<organism>
    <name type="scientific">Eremothecium gossypii (strain ATCC 10895 / CBS 109.51 / FGSC 9923 / NRRL Y-1056)</name>
    <name type="common">Yeast</name>
    <name type="synonym">Ashbya gossypii</name>
    <dbReference type="NCBI Taxonomy" id="284811"/>
    <lineage>
        <taxon>Eukaryota</taxon>
        <taxon>Fungi</taxon>
        <taxon>Dikarya</taxon>
        <taxon>Ascomycota</taxon>
        <taxon>Saccharomycotina</taxon>
        <taxon>Saccharomycetes</taxon>
        <taxon>Saccharomycetales</taxon>
        <taxon>Saccharomycetaceae</taxon>
        <taxon>Eremothecium</taxon>
    </lineage>
</organism>
<sequence>MSSGNIWKQLLEENSEQLDQSTTETYVVCCENEDSLNQFLQQCWQIDEGEKVTNLEPLGFFTKVVSRDEENLRLNVYYAKSPLDAQTLQFLGVFLRQMETSQIRWIFLLDWLLDDKRLWLRQLRNSWAALEEAQVAPFPGGAVVVVLNPSHVTQLERNTMVWNSRRLDLVHQTLRAACLNTGSALVTLDPNTAREDVMHICALLAGLPTSRPVAMLSLQSLFIPHGADSIGKICTIAPEFPVATVFDNDFVSSTFEAAIAPELTPGPRVPSDHPWLTEPTNPPSEATAWHFDLQGRLATLYRHLGDSNKAISVTQHRFHKPRSEDYAYEFELPSKHPTIRDLIRSAAADSPNDVADSIDGLMDGIVQRNVH</sequence>
<dbReference type="EMBL" id="AE016820">
    <property type="protein sequence ID" value="AAS54158.1"/>
    <property type="molecule type" value="Genomic_DNA"/>
</dbReference>
<dbReference type="RefSeq" id="NP_986334.1">
    <property type="nucleotide sequence ID" value="NM_211396.1"/>
</dbReference>
<dbReference type="FunCoup" id="Q751N0">
    <property type="interactions" value="43"/>
</dbReference>
<dbReference type="STRING" id="284811.Q751N0"/>
<dbReference type="EnsemblFungi" id="AAS54158">
    <property type="protein sequence ID" value="AAS54158"/>
    <property type="gene ID" value="AGOS_AGL333W"/>
</dbReference>
<dbReference type="GeneID" id="4622627"/>
<dbReference type="KEGG" id="ago:AGOS_AGL333W"/>
<dbReference type="eggNOG" id="ENOG502S4QG">
    <property type="taxonomic scope" value="Eukaryota"/>
</dbReference>
<dbReference type="HOGENOM" id="CLU_064762_0_0_1"/>
<dbReference type="InParanoid" id="Q751N0"/>
<dbReference type="OMA" id="QIRWIFL"/>
<dbReference type="OrthoDB" id="27603at2759"/>
<dbReference type="Proteomes" id="UP000000591">
    <property type="component" value="Chromosome VII"/>
</dbReference>
<dbReference type="GO" id="GO:0005737">
    <property type="term" value="C:cytoplasm"/>
    <property type="evidence" value="ECO:0007669"/>
    <property type="project" value="UniProtKB-KW"/>
</dbReference>
<dbReference type="GO" id="GO:0030286">
    <property type="term" value="C:dynein complex"/>
    <property type="evidence" value="ECO:0007669"/>
    <property type="project" value="UniProtKB-KW"/>
</dbReference>
<dbReference type="GO" id="GO:0005874">
    <property type="term" value="C:microtubule"/>
    <property type="evidence" value="ECO:0007669"/>
    <property type="project" value="UniProtKB-KW"/>
</dbReference>
<dbReference type="InterPro" id="IPR022780">
    <property type="entry name" value="Dynein_light_int_chain"/>
</dbReference>
<dbReference type="Pfam" id="PF05783">
    <property type="entry name" value="DLIC"/>
    <property type="match status" value="1"/>
</dbReference>
<protein>
    <recommendedName>
        <fullName>Cytoplasmic dynein intermediate light chain DYN3</fullName>
        <shortName>Dynein protein 3</shortName>
    </recommendedName>
</protein>
<feature type="chain" id="PRO_0000292443" description="Cytoplasmic dynein intermediate light chain DYN3">
    <location>
        <begin position="1"/>
        <end position="371"/>
    </location>
</feature>
<comment type="function">
    <text evidence="1">Component of the cytoplasmic dynein which acts as a motor for the intracellular retrograde motility of vesicles and organelles along microtubules. May play an important role in the proper orientation of the mitotic spindle into the budding daughter cell yeast. Probably required for normal progression of the cell cycle (By similarity).</text>
</comment>
<comment type="subunit">
    <text evidence="1">The cytoplasmic dynein is composed of at least two heavy chains and a number of intermediate and light chains.</text>
</comment>
<comment type="subcellular location">
    <subcellularLocation>
        <location evidence="1">Cytoplasm</location>
        <location evidence="1">Cytoskeleton</location>
    </subcellularLocation>
</comment>
<comment type="similarity">
    <text evidence="2">Belongs to the dynein light intermediate chain DYN3 family.</text>
</comment>